<sequence length="137" mass="14271">MSSSQGGGGRGKAKTTKAVSRSSKAGLQFPVGRIARYLKAGKYAERVGAGAPVYLSAVLEYLAAEVLELAGNAARDNKKNRIVPRHIQLAVRNDEELSRLLGTVTIAAGGVLPNIQQVLLPKKGGGKGDIGSASQEF</sequence>
<comment type="function">
    <text evidence="1">Variant histone H2A which replaces conventional H2A in a subset of nucleosomes. Nucleosomes wrap and compact DNA into chromatin, limiting DNA accessibility to the cellular machineries which require DNA as a template. Histones thereby play a central role in transcription regulation, DNA repair, DNA replication and chromosomal stability. DNA accessibility is regulated via a complex set of post-translational modifications of histones, also called histone code, and nucleosome remodeling. Required for checkpoint-mediated arrest of cell cycle progression in response to low doses of ionizing radiation and for efficient repair of DNA double strand breaks (DSBs) specifically when modified by C-terminal phosphorylation (By similarity).</text>
</comment>
<comment type="subunit">
    <text evidence="1">The nucleosome is a histone octamer containing two molecules each of H2A, H2B, H3 and H4 assembled in one H3-H4 heterotetramer and two H2A-H2B heterodimers. The octamer wraps approximately 147 bp of DNA. Interacts with numerous proteins required for DNA damage signaling and repair when phosphorylated on Ser-134 (By similarity).</text>
</comment>
<comment type="subcellular location">
    <subcellularLocation>
        <location evidence="1">Nucleus</location>
    </subcellularLocation>
    <subcellularLocation>
        <location evidence="1">Chromosome</location>
    </subcellularLocation>
</comment>
<comment type="domain">
    <text>The [ST]-Q motif constitutes a recognition sequence for kinases from the PI3/PI4-kinase family.</text>
</comment>
<comment type="PTM">
    <text evidence="1">Phosphorylated to form H2AXS139ph (gamma-H2AX) in response to DNA double strand breaks (DSBs) generated by exogenous genotoxic agents and by stalled replication forks, and may also occur during meiotic recombination events. Phosphorylation can extend up to several thousand nucleosomes from the actual site of the DSB and may mark the surrounding chromatin for recruitment of proteins required for DNA damage signaling and repair. Widespread phosphorylation may also serve to amplify the damage signal or aid repair of persistent lesions. H2AXS139ph in response to ionizing radiation is mediated by ATM while defects in DNA replication induce H2AXS139ph subsequent to activation of ATR. Dephosphorylation of H2AXS139ph by PP2A is required for DNA DSB repair (By similarity).</text>
</comment>
<comment type="similarity">
    <text evidence="3">Belongs to the histone H2A family.</text>
</comment>
<comment type="caution">
    <text evidence="3">To ensure consistency between histone entries, we follow the 'Brno' nomenclature for histone modifications, with positions referring to those used in the literature for the 'closest' model organism. Due to slight variations in histone sequences between organisms and to the presence of initiator methionine in UniProtKB/Swiss-Prot sequences, the actual positions of modified amino acids in the sequence generally differ. In this entry the following conventions are used: H2AXS139ph = phosphorylated Ser-134.</text>
</comment>
<feature type="chain" id="PRO_0000296127" description="Probable histone H2AXa">
    <location>
        <begin position="1"/>
        <end position="137"/>
    </location>
</feature>
<feature type="region of interest" description="Disordered" evidence="2">
    <location>
        <begin position="1"/>
        <end position="21"/>
    </location>
</feature>
<feature type="short sequence motif" description="[ST]-Q motif">
    <location>
        <begin position="134"/>
        <end position="135"/>
    </location>
</feature>
<feature type="compositionally biased region" description="Gly residues" evidence="2">
    <location>
        <begin position="1"/>
        <end position="10"/>
    </location>
</feature>
<feature type="modified residue" description="Phosphoserine; by ATM and ATR" evidence="3">
    <location>
        <position position="134"/>
    </location>
</feature>
<accession>A2XLI0</accession>
<keyword id="KW-0158">Chromosome</keyword>
<keyword id="KW-0238">DNA-binding</keyword>
<keyword id="KW-0544">Nucleosome core</keyword>
<keyword id="KW-0539">Nucleus</keyword>
<keyword id="KW-0597">Phosphoprotein</keyword>
<keyword id="KW-1185">Reference proteome</keyword>
<organism>
    <name type="scientific">Oryza sativa subsp. indica</name>
    <name type="common">Rice</name>
    <dbReference type="NCBI Taxonomy" id="39946"/>
    <lineage>
        <taxon>Eukaryota</taxon>
        <taxon>Viridiplantae</taxon>
        <taxon>Streptophyta</taxon>
        <taxon>Embryophyta</taxon>
        <taxon>Tracheophyta</taxon>
        <taxon>Spermatophyta</taxon>
        <taxon>Magnoliopsida</taxon>
        <taxon>Liliopsida</taxon>
        <taxon>Poales</taxon>
        <taxon>Poaceae</taxon>
        <taxon>BOP clade</taxon>
        <taxon>Oryzoideae</taxon>
        <taxon>Oryzeae</taxon>
        <taxon>Oryzinae</taxon>
        <taxon>Oryza</taxon>
        <taxon>Oryza sativa</taxon>
    </lineage>
</organism>
<reference key="1">
    <citation type="journal article" date="2005" name="PLoS Biol.">
        <title>The genomes of Oryza sativa: a history of duplications.</title>
        <authorList>
            <person name="Yu J."/>
            <person name="Wang J."/>
            <person name="Lin W."/>
            <person name="Li S."/>
            <person name="Li H."/>
            <person name="Zhou J."/>
            <person name="Ni P."/>
            <person name="Dong W."/>
            <person name="Hu S."/>
            <person name="Zeng C."/>
            <person name="Zhang J."/>
            <person name="Zhang Y."/>
            <person name="Li R."/>
            <person name="Xu Z."/>
            <person name="Li S."/>
            <person name="Li X."/>
            <person name="Zheng H."/>
            <person name="Cong L."/>
            <person name="Lin L."/>
            <person name="Yin J."/>
            <person name="Geng J."/>
            <person name="Li G."/>
            <person name="Shi J."/>
            <person name="Liu J."/>
            <person name="Lv H."/>
            <person name="Li J."/>
            <person name="Wang J."/>
            <person name="Deng Y."/>
            <person name="Ran L."/>
            <person name="Shi X."/>
            <person name="Wang X."/>
            <person name="Wu Q."/>
            <person name="Li C."/>
            <person name="Ren X."/>
            <person name="Wang J."/>
            <person name="Wang X."/>
            <person name="Li D."/>
            <person name="Liu D."/>
            <person name="Zhang X."/>
            <person name="Ji Z."/>
            <person name="Zhao W."/>
            <person name="Sun Y."/>
            <person name="Zhang Z."/>
            <person name="Bao J."/>
            <person name="Han Y."/>
            <person name="Dong L."/>
            <person name="Ji J."/>
            <person name="Chen P."/>
            <person name="Wu S."/>
            <person name="Liu J."/>
            <person name="Xiao Y."/>
            <person name="Bu D."/>
            <person name="Tan J."/>
            <person name="Yang L."/>
            <person name="Ye C."/>
            <person name="Zhang J."/>
            <person name="Xu J."/>
            <person name="Zhou Y."/>
            <person name="Yu Y."/>
            <person name="Zhang B."/>
            <person name="Zhuang S."/>
            <person name="Wei H."/>
            <person name="Liu B."/>
            <person name="Lei M."/>
            <person name="Yu H."/>
            <person name="Li Y."/>
            <person name="Xu H."/>
            <person name="Wei S."/>
            <person name="He X."/>
            <person name="Fang L."/>
            <person name="Zhang Z."/>
            <person name="Zhang Y."/>
            <person name="Huang X."/>
            <person name="Su Z."/>
            <person name="Tong W."/>
            <person name="Li J."/>
            <person name="Tong Z."/>
            <person name="Li S."/>
            <person name="Ye J."/>
            <person name="Wang L."/>
            <person name="Fang L."/>
            <person name="Lei T."/>
            <person name="Chen C.-S."/>
            <person name="Chen H.-C."/>
            <person name="Xu Z."/>
            <person name="Li H."/>
            <person name="Huang H."/>
            <person name="Zhang F."/>
            <person name="Xu H."/>
            <person name="Li N."/>
            <person name="Zhao C."/>
            <person name="Li S."/>
            <person name="Dong L."/>
            <person name="Huang Y."/>
            <person name="Li L."/>
            <person name="Xi Y."/>
            <person name="Qi Q."/>
            <person name="Li W."/>
            <person name="Zhang B."/>
            <person name="Hu W."/>
            <person name="Zhang Y."/>
            <person name="Tian X."/>
            <person name="Jiao Y."/>
            <person name="Liang X."/>
            <person name="Jin J."/>
            <person name="Gao L."/>
            <person name="Zheng W."/>
            <person name="Hao B."/>
            <person name="Liu S.-M."/>
            <person name="Wang W."/>
            <person name="Yuan L."/>
            <person name="Cao M."/>
            <person name="McDermott J."/>
            <person name="Samudrala R."/>
            <person name="Wang J."/>
            <person name="Wong G.K.-S."/>
            <person name="Yang H."/>
        </authorList>
    </citation>
    <scope>NUCLEOTIDE SEQUENCE [LARGE SCALE GENOMIC DNA]</scope>
    <source>
        <strain>cv. 93-11</strain>
    </source>
</reference>
<dbReference type="EMBL" id="CM000128">
    <property type="protein sequence ID" value="EAY91690.1"/>
    <property type="molecule type" value="Genomic_DNA"/>
</dbReference>
<dbReference type="SMR" id="A2XLI0"/>
<dbReference type="STRING" id="39946.A2XLI0"/>
<dbReference type="iPTMnet" id="A2XLI0"/>
<dbReference type="EnsemblPlants" id="BGIOSGA013476-TA">
    <property type="protein sequence ID" value="BGIOSGA013476-PA"/>
    <property type="gene ID" value="BGIOSGA013476"/>
</dbReference>
<dbReference type="EnsemblPlants" id="OsGoSa_03g0032520.01">
    <property type="protein sequence ID" value="OsGoSa_03g0032520.01"/>
    <property type="gene ID" value="OsGoSa_03g0032520"/>
</dbReference>
<dbReference type="EnsemblPlants" id="OsIR64_03g0032270.01">
    <property type="protein sequence ID" value="OsIR64_03g0032270.01"/>
    <property type="gene ID" value="OsIR64_03g0032270"/>
</dbReference>
<dbReference type="EnsemblPlants" id="OsKYG_03g0032730.01">
    <property type="protein sequence ID" value="OsKYG_03g0032730.01"/>
    <property type="gene ID" value="OsKYG_03g0032730"/>
</dbReference>
<dbReference type="EnsemblPlants" id="OsLaMu_03g0032450.01">
    <property type="protein sequence ID" value="OsLaMu_03g0032450.01"/>
    <property type="gene ID" value="OsLaMu_03g0032450"/>
</dbReference>
<dbReference type="EnsemblPlants" id="OsLima_03g0032720.01">
    <property type="protein sequence ID" value="OsLima_03g0032720.01"/>
    <property type="gene ID" value="OsLima_03g0032720"/>
</dbReference>
<dbReference type="EnsemblPlants" id="OsLiXu_03g0032480.01">
    <property type="protein sequence ID" value="OsLiXu_03g0032480.01"/>
    <property type="gene ID" value="OsLiXu_03g0032480"/>
</dbReference>
<dbReference type="EnsemblPlants" id="OsLiXu_Ung0014070.01">
    <property type="protein sequence ID" value="OsLiXu_Ung0014070.01"/>
    <property type="gene ID" value="OsLiXu_Ung0014070"/>
</dbReference>
<dbReference type="EnsemblPlants" id="OsMH63_03G032540_01">
    <property type="protein sequence ID" value="OsMH63_03G032540_01"/>
    <property type="gene ID" value="OsMH63_03G032540"/>
</dbReference>
<dbReference type="EnsemblPlants" id="OsPr106_03g0032540.01">
    <property type="protein sequence ID" value="OsPr106_03g0032540.01"/>
    <property type="gene ID" value="OsPr106_03g0032540"/>
</dbReference>
<dbReference type="EnsemblPlants" id="OsZS97_03G032470_01">
    <property type="protein sequence ID" value="OsZS97_03G032470_01"/>
    <property type="gene ID" value="OsZS97_03G032470"/>
</dbReference>
<dbReference type="Gramene" id="BGIOSGA013476-TA">
    <property type="protein sequence ID" value="BGIOSGA013476-PA"/>
    <property type="gene ID" value="BGIOSGA013476"/>
</dbReference>
<dbReference type="Gramene" id="OsGoSa_03g0032520.01">
    <property type="protein sequence ID" value="OsGoSa_03g0032520.01"/>
    <property type="gene ID" value="OsGoSa_03g0032520"/>
</dbReference>
<dbReference type="Gramene" id="OsIR64_03g0032270.01">
    <property type="protein sequence ID" value="OsIR64_03g0032270.01"/>
    <property type="gene ID" value="OsIR64_03g0032270"/>
</dbReference>
<dbReference type="Gramene" id="OsKYG_03g0032730.01">
    <property type="protein sequence ID" value="OsKYG_03g0032730.01"/>
    <property type="gene ID" value="OsKYG_03g0032730"/>
</dbReference>
<dbReference type="Gramene" id="OsLaMu_03g0032450.01">
    <property type="protein sequence ID" value="OsLaMu_03g0032450.01"/>
    <property type="gene ID" value="OsLaMu_03g0032450"/>
</dbReference>
<dbReference type="Gramene" id="OsLima_03g0032720.01">
    <property type="protein sequence ID" value="OsLima_03g0032720.01"/>
    <property type="gene ID" value="OsLima_03g0032720"/>
</dbReference>
<dbReference type="Gramene" id="OsLiXu_03g0032480.01">
    <property type="protein sequence ID" value="OsLiXu_03g0032480.01"/>
    <property type="gene ID" value="OsLiXu_03g0032480"/>
</dbReference>
<dbReference type="Gramene" id="OsLiXu_Ung0014070.01">
    <property type="protein sequence ID" value="OsLiXu_Ung0014070.01"/>
    <property type="gene ID" value="OsLiXu_Ung0014070"/>
</dbReference>
<dbReference type="Gramene" id="OsMH63_03G032540_01">
    <property type="protein sequence ID" value="OsMH63_03G032540_01"/>
    <property type="gene ID" value="OsMH63_03G032540"/>
</dbReference>
<dbReference type="Gramene" id="OsPr106_03g0032540.01">
    <property type="protein sequence ID" value="OsPr106_03g0032540.01"/>
    <property type="gene ID" value="OsPr106_03g0032540"/>
</dbReference>
<dbReference type="Gramene" id="OsZS97_03G032470_01">
    <property type="protein sequence ID" value="OsZS97_03G032470_01"/>
    <property type="gene ID" value="OsZS97_03G032470"/>
</dbReference>
<dbReference type="HOGENOM" id="CLU_062828_3_0_1"/>
<dbReference type="OMA" id="KFQMAGR"/>
<dbReference type="OrthoDB" id="9421954at2759"/>
<dbReference type="Proteomes" id="UP000007015">
    <property type="component" value="Chromosome 3"/>
</dbReference>
<dbReference type="GO" id="GO:0000786">
    <property type="term" value="C:nucleosome"/>
    <property type="evidence" value="ECO:0007669"/>
    <property type="project" value="UniProtKB-KW"/>
</dbReference>
<dbReference type="GO" id="GO:0005634">
    <property type="term" value="C:nucleus"/>
    <property type="evidence" value="ECO:0007669"/>
    <property type="project" value="UniProtKB-SubCell"/>
</dbReference>
<dbReference type="GO" id="GO:0003677">
    <property type="term" value="F:DNA binding"/>
    <property type="evidence" value="ECO:0007669"/>
    <property type="project" value="UniProtKB-KW"/>
</dbReference>
<dbReference type="GO" id="GO:0046982">
    <property type="term" value="F:protein heterodimerization activity"/>
    <property type="evidence" value="ECO:0007669"/>
    <property type="project" value="InterPro"/>
</dbReference>
<dbReference type="GO" id="GO:0030527">
    <property type="term" value="F:structural constituent of chromatin"/>
    <property type="evidence" value="ECO:0007669"/>
    <property type="project" value="InterPro"/>
</dbReference>
<dbReference type="CDD" id="cd00074">
    <property type="entry name" value="HFD_H2A"/>
    <property type="match status" value="1"/>
</dbReference>
<dbReference type="FunFam" id="1.10.20.10:FF:000009">
    <property type="entry name" value="Histone H2A"/>
    <property type="match status" value="1"/>
</dbReference>
<dbReference type="Gene3D" id="1.10.20.10">
    <property type="entry name" value="Histone, subunit A"/>
    <property type="match status" value="1"/>
</dbReference>
<dbReference type="InterPro" id="IPR009072">
    <property type="entry name" value="Histone-fold"/>
</dbReference>
<dbReference type="InterPro" id="IPR002119">
    <property type="entry name" value="Histone_H2A"/>
</dbReference>
<dbReference type="InterPro" id="IPR007125">
    <property type="entry name" value="Histone_H2A/H2B/H3"/>
</dbReference>
<dbReference type="InterPro" id="IPR032454">
    <property type="entry name" value="Histone_H2A_C"/>
</dbReference>
<dbReference type="InterPro" id="IPR032458">
    <property type="entry name" value="Histone_H2A_CS"/>
</dbReference>
<dbReference type="PANTHER" id="PTHR23430">
    <property type="entry name" value="HISTONE H2A"/>
    <property type="match status" value="1"/>
</dbReference>
<dbReference type="Pfam" id="PF00125">
    <property type="entry name" value="Histone"/>
    <property type="match status" value="1"/>
</dbReference>
<dbReference type="Pfam" id="PF16211">
    <property type="entry name" value="Histone_H2A_C"/>
    <property type="match status" value="1"/>
</dbReference>
<dbReference type="PRINTS" id="PR00620">
    <property type="entry name" value="HISTONEH2A"/>
</dbReference>
<dbReference type="SMART" id="SM00414">
    <property type="entry name" value="H2A"/>
    <property type="match status" value="1"/>
</dbReference>
<dbReference type="SUPFAM" id="SSF47113">
    <property type="entry name" value="Histone-fold"/>
    <property type="match status" value="1"/>
</dbReference>
<dbReference type="PROSITE" id="PS00046">
    <property type="entry name" value="HISTONE_H2A"/>
    <property type="match status" value="1"/>
</dbReference>
<evidence type="ECO:0000250" key="1"/>
<evidence type="ECO:0000256" key="2">
    <source>
        <dbReference type="SAM" id="MobiDB-lite"/>
    </source>
</evidence>
<evidence type="ECO:0000305" key="3"/>
<name>H2AXA_ORYSI</name>
<proteinExistence type="inferred from homology"/>
<protein>
    <recommendedName>
        <fullName>Probable histone H2AXa</fullName>
    </recommendedName>
</protein>
<gene>
    <name type="ORF">OsI_012923</name>
</gene>